<reference key="1">
    <citation type="journal article" date="2000" name="Nature">
        <title>Complete DNA sequence of a serogroup A strain of Neisseria meningitidis Z2491.</title>
        <authorList>
            <person name="Parkhill J."/>
            <person name="Achtman M."/>
            <person name="James K.D."/>
            <person name="Bentley S.D."/>
            <person name="Churcher C.M."/>
            <person name="Klee S.R."/>
            <person name="Morelli G."/>
            <person name="Basham D."/>
            <person name="Brown D."/>
            <person name="Chillingworth T."/>
            <person name="Davies R.M."/>
            <person name="Davis P."/>
            <person name="Devlin K."/>
            <person name="Feltwell T."/>
            <person name="Hamlin N."/>
            <person name="Holroyd S."/>
            <person name="Jagels K."/>
            <person name="Leather S."/>
            <person name="Moule S."/>
            <person name="Mungall K.L."/>
            <person name="Quail M.A."/>
            <person name="Rajandream M.A."/>
            <person name="Rutherford K.M."/>
            <person name="Simmonds M."/>
            <person name="Skelton J."/>
            <person name="Whitehead S."/>
            <person name="Spratt B.G."/>
            <person name="Barrell B.G."/>
        </authorList>
    </citation>
    <scope>NUCLEOTIDE SEQUENCE [LARGE SCALE GENOMIC DNA]</scope>
    <source>
        <strain>DSM 15465 / Z2491</strain>
    </source>
</reference>
<feature type="chain" id="PRO_0000129248" description="Large ribosomal subunit protein uL4">
    <location>
        <begin position="1"/>
        <end position="206"/>
    </location>
</feature>
<feature type="region of interest" description="Disordered" evidence="2">
    <location>
        <begin position="46"/>
        <end position="95"/>
    </location>
</feature>
<feature type="compositionally biased region" description="Basic residues" evidence="2">
    <location>
        <begin position="59"/>
        <end position="70"/>
    </location>
</feature>
<keyword id="KW-0687">Ribonucleoprotein</keyword>
<keyword id="KW-0689">Ribosomal protein</keyword>
<keyword id="KW-0694">RNA-binding</keyword>
<keyword id="KW-0699">rRNA-binding</keyword>
<protein>
    <recommendedName>
        <fullName evidence="1">Large ribosomal subunit protein uL4</fullName>
    </recommendedName>
    <alternativeName>
        <fullName evidence="3">50S ribosomal protein L4</fullName>
    </alternativeName>
</protein>
<comment type="function">
    <text evidence="1">One of the primary rRNA binding proteins, this protein initially binds near the 5'-end of the 23S rRNA. It is important during the early stages of 50S assembly. It makes multiple contacts with different domains of the 23S rRNA in the assembled 50S subunit and ribosome.</text>
</comment>
<comment type="function">
    <text evidence="1">Forms part of the polypeptide exit tunnel.</text>
</comment>
<comment type="subunit">
    <text evidence="1">Part of the 50S ribosomal subunit.</text>
</comment>
<comment type="similarity">
    <text evidence="1">Belongs to the universal ribosomal protein uL4 family.</text>
</comment>
<evidence type="ECO:0000255" key="1">
    <source>
        <dbReference type="HAMAP-Rule" id="MF_01328"/>
    </source>
</evidence>
<evidence type="ECO:0000256" key="2">
    <source>
        <dbReference type="SAM" id="MobiDB-lite"/>
    </source>
</evidence>
<evidence type="ECO:0000305" key="3"/>
<proteinExistence type="inferred from homology"/>
<accession>P61056</accession>
<accession>A1INY9</accession>
<accession>Q9JRA2</accession>
<name>RL4_NEIMA</name>
<organism>
    <name type="scientific">Neisseria meningitidis serogroup A / serotype 4A (strain DSM 15465 / Z2491)</name>
    <dbReference type="NCBI Taxonomy" id="122587"/>
    <lineage>
        <taxon>Bacteria</taxon>
        <taxon>Pseudomonadati</taxon>
        <taxon>Pseudomonadota</taxon>
        <taxon>Betaproteobacteria</taxon>
        <taxon>Neisseriales</taxon>
        <taxon>Neisseriaceae</taxon>
        <taxon>Neisseria</taxon>
    </lineage>
</organism>
<dbReference type="EMBL" id="AL157959">
    <property type="protein sequence ID" value="CAM07446.1"/>
    <property type="molecule type" value="Genomic_DNA"/>
</dbReference>
<dbReference type="RefSeq" id="WP_002215402.1">
    <property type="nucleotide sequence ID" value="NC_003116.1"/>
</dbReference>
<dbReference type="SMR" id="P61056"/>
<dbReference type="EnsemblBacteria" id="CAM07446">
    <property type="protein sequence ID" value="CAM07446"/>
    <property type="gene ID" value="NMA0128"/>
</dbReference>
<dbReference type="GeneID" id="93387218"/>
<dbReference type="KEGG" id="nma:NMA0128"/>
<dbReference type="HOGENOM" id="CLU_041575_5_2_4"/>
<dbReference type="Proteomes" id="UP000000626">
    <property type="component" value="Chromosome"/>
</dbReference>
<dbReference type="GO" id="GO:1990904">
    <property type="term" value="C:ribonucleoprotein complex"/>
    <property type="evidence" value="ECO:0007669"/>
    <property type="project" value="UniProtKB-KW"/>
</dbReference>
<dbReference type="GO" id="GO:0005840">
    <property type="term" value="C:ribosome"/>
    <property type="evidence" value="ECO:0007669"/>
    <property type="project" value="UniProtKB-KW"/>
</dbReference>
<dbReference type="GO" id="GO:0019843">
    <property type="term" value="F:rRNA binding"/>
    <property type="evidence" value="ECO:0007669"/>
    <property type="project" value="UniProtKB-UniRule"/>
</dbReference>
<dbReference type="GO" id="GO:0003735">
    <property type="term" value="F:structural constituent of ribosome"/>
    <property type="evidence" value="ECO:0007669"/>
    <property type="project" value="InterPro"/>
</dbReference>
<dbReference type="GO" id="GO:0006412">
    <property type="term" value="P:translation"/>
    <property type="evidence" value="ECO:0007669"/>
    <property type="project" value="UniProtKB-UniRule"/>
</dbReference>
<dbReference type="FunFam" id="3.40.1370.10:FF:000010">
    <property type="entry name" value="50S ribosomal protein L4"/>
    <property type="match status" value="1"/>
</dbReference>
<dbReference type="Gene3D" id="3.40.1370.10">
    <property type="match status" value="1"/>
</dbReference>
<dbReference type="HAMAP" id="MF_01328_B">
    <property type="entry name" value="Ribosomal_uL4_B"/>
    <property type="match status" value="1"/>
</dbReference>
<dbReference type="InterPro" id="IPR002136">
    <property type="entry name" value="Ribosomal_uL4"/>
</dbReference>
<dbReference type="InterPro" id="IPR013005">
    <property type="entry name" value="Ribosomal_uL4-like"/>
</dbReference>
<dbReference type="InterPro" id="IPR023574">
    <property type="entry name" value="Ribosomal_uL4_dom_sf"/>
</dbReference>
<dbReference type="NCBIfam" id="TIGR03953">
    <property type="entry name" value="rplD_bact"/>
    <property type="match status" value="1"/>
</dbReference>
<dbReference type="PANTHER" id="PTHR10746">
    <property type="entry name" value="50S RIBOSOMAL PROTEIN L4"/>
    <property type="match status" value="1"/>
</dbReference>
<dbReference type="PANTHER" id="PTHR10746:SF6">
    <property type="entry name" value="LARGE RIBOSOMAL SUBUNIT PROTEIN UL4M"/>
    <property type="match status" value="1"/>
</dbReference>
<dbReference type="Pfam" id="PF00573">
    <property type="entry name" value="Ribosomal_L4"/>
    <property type="match status" value="1"/>
</dbReference>
<dbReference type="SUPFAM" id="SSF52166">
    <property type="entry name" value="Ribosomal protein L4"/>
    <property type="match status" value="1"/>
</dbReference>
<sequence>MELKVIDAKGQVSGSLSVSDALFAREYNEALVHQLVNAYLANARSGNRAQKTRAEVKHSTKKPWRQKGTGRARSGMTSSPLWRKGGRAFPNKPDENFTQKVNRKMYRAGMATILSQLTRDERLFAIEALTAETPKTKVFAEQVKNLGLEQVLFVTKQLDENVYLASRNLPNVLVLEAQQVDPYSLLRYKKVIITKDAVAQLEEQWV</sequence>
<gene>
    <name evidence="1" type="primary">rplD</name>
    <name type="ordered locus">NMA0128</name>
</gene>